<comment type="function">
    <text evidence="1">Mitochondrial GTPase involved in mitochondrial trafficking. Probably involved in control of anterograde transport of mitochondria and their subcellular distribution.</text>
</comment>
<comment type="subcellular location">
    <subcellularLocation>
        <location evidence="1">Mitochondrion outer membrane</location>
        <topology evidence="1">Single-pass type IV membrane protein</topology>
    </subcellularLocation>
</comment>
<comment type="similarity">
    <text evidence="4 6">Belongs to the mitochondrial Rho GTPase family.</text>
</comment>
<accession>Q2UM43</accession>
<feature type="chain" id="PRO_0000239331" description="Mitochondrial Rho GTPase 1">
    <location>
        <begin position="1"/>
        <end position="633"/>
    </location>
</feature>
<feature type="topological domain" description="Cytoplasmic" evidence="2">
    <location>
        <begin position="1"/>
        <end position="603"/>
    </location>
</feature>
<feature type="transmembrane region" description="Helical; Anchor for type IV membrane protein" evidence="2">
    <location>
        <begin position="604"/>
        <end position="624"/>
    </location>
</feature>
<feature type="topological domain" description="Mitochondrial intermembrane" evidence="2">
    <location>
        <begin position="625"/>
        <end position="633"/>
    </location>
</feature>
<feature type="domain" description="Miro 1" evidence="4">
    <location>
        <begin position="1"/>
        <end position="170"/>
    </location>
</feature>
<feature type="domain" description="EF-hand 1" evidence="3">
    <location>
        <begin position="186"/>
        <end position="221"/>
    </location>
</feature>
<feature type="domain" description="EF-hand 2" evidence="3">
    <location>
        <begin position="306"/>
        <end position="341"/>
    </location>
</feature>
<feature type="domain" description="Miro 2" evidence="4">
    <location>
        <begin position="422"/>
        <end position="588"/>
    </location>
</feature>
<feature type="region of interest" description="Disordered" evidence="5">
    <location>
        <begin position="398"/>
        <end position="418"/>
    </location>
</feature>
<feature type="compositionally biased region" description="Basic residues" evidence="5">
    <location>
        <begin position="408"/>
        <end position="418"/>
    </location>
</feature>
<feature type="binding site" evidence="2">
    <location>
        <begin position="10"/>
        <end position="17"/>
    </location>
    <ligand>
        <name>GTP</name>
        <dbReference type="ChEBI" id="CHEBI:37565"/>
        <label>1</label>
    </ligand>
</feature>
<feature type="binding site" evidence="2">
    <location>
        <begin position="59"/>
        <end position="63"/>
    </location>
    <ligand>
        <name>GTP</name>
        <dbReference type="ChEBI" id="CHEBI:37565"/>
        <label>1</label>
    </ligand>
</feature>
<feature type="binding site" evidence="2">
    <location>
        <begin position="115"/>
        <end position="118"/>
    </location>
    <ligand>
        <name>GTP</name>
        <dbReference type="ChEBI" id="CHEBI:37565"/>
        <label>1</label>
    </ligand>
</feature>
<feature type="binding site" evidence="3">
    <location>
        <position position="199"/>
    </location>
    <ligand>
        <name>Ca(2+)</name>
        <dbReference type="ChEBI" id="CHEBI:29108"/>
        <label>1</label>
    </ligand>
</feature>
<feature type="binding site" evidence="3">
    <location>
        <position position="201"/>
    </location>
    <ligand>
        <name>Ca(2+)</name>
        <dbReference type="ChEBI" id="CHEBI:29108"/>
        <label>1</label>
    </ligand>
</feature>
<feature type="binding site" evidence="3">
    <location>
        <position position="203"/>
    </location>
    <ligand>
        <name>Ca(2+)</name>
        <dbReference type="ChEBI" id="CHEBI:29108"/>
        <label>1</label>
    </ligand>
</feature>
<feature type="binding site" evidence="3">
    <location>
        <position position="205"/>
    </location>
    <ligand>
        <name>Ca(2+)</name>
        <dbReference type="ChEBI" id="CHEBI:29108"/>
        <label>1</label>
    </ligand>
</feature>
<feature type="binding site" evidence="3">
    <location>
        <position position="210"/>
    </location>
    <ligand>
        <name>Ca(2+)</name>
        <dbReference type="ChEBI" id="CHEBI:29108"/>
        <label>1</label>
    </ligand>
</feature>
<feature type="binding site" evidence="6">
    <location>
        <position position="319"/>
    </location>
    <ligand>
        <name>Ca(2+)</name>
        <dbReference type="ChEBI" id="CHEBI:29108"/>
        <label>2</label>
    </ligand>
</feature>
<feature type="binding site" evidence="6">
    <location>
        <position position="321"/>
    </location>
    <ligand>
        <name>Ca(2+)</name>
        <dbReference type="ChEBI" id="CHEBI:29108"/>
        <label>2</label>
    </ligand>
</feature>
<feature type="binding site" evidence="6">
    <location>
        <position position="323"/>
    </location>
    <ligand>
        <name>Ca(2+)</name>
        <dbReference type="ChEBI" id="CHEBI:29108"/>
        <label>2</label>
    </ligand>
</feature>
<feature type="binding site" evidence="6">
    <location>
        <position position="330"/>
    </location>
    <ligand>
        <name>Ca(2+)</name>
        <dbReference type="ChEBI" id="CHEBI:29108"/>
        <label>2</label>
    </ligand>
</feature>
<feature type="binding site" evidence="2">
    <location>
        <begin position="431"/>
        <end position="438"/>
    </location>
    <ligand>
        <name>GTP</name>
        <dbReference type="ChEBI" id="CHEBI:37565"/>
        <label>2</label>
    </ligand>
</feature>
<feature type="binding site" evidence="2">
    <location>
        <begin position="467"/>
        <end position="471"/>
    </location>
    <ligand>
        <name>GTP</name>
        <dbReference type="ChEBI" id="CHEBI:37565"/>
        <label>2</label>
    </ligand>
</feature>
<feature type="binding site" evidence="2">
    <location>
        <begin position="537"/>
        <end position="540"/>
    </location>
    <ligand>
        <name>GTP</name>
        <dbReference type="ChEBI" id="CHEBI:37565"/>
        <label>2</label>
    </ligand>
</feature>
<sequence length="633" mass="70287">MATVRICVCGDEGTGKSSLITSLVKGVFVTNKIQPILPQITIPPTIGTPENVTTTTVVDTSALPQERSNLAREIRKSNVILLVYSDHYSYERVALFWLPYFRSLGVNVPVVLCANKSDLAADHSEAQVIEEEMLPLMAEFKEIDSCIRTSAREHRNVNEAFFLCQKAVTHPIAPLFDSKESALKPAAVAALQRIFYLSDKDRDGYLSDKELEDFQMRCFEKPLSEEDLVHIKETIQKTHPTSVAPSGIDCRGFIHLNKMYAEKGRHETVWIILRAFQYTDNLSLQESFLHPRFEVPPYASAELSPEGYRFFVNLFLLSDKDNDGGLNDAELASLFAPTPGLPASWADGSFPSSTVRNEAGHVTLQGWLAQWSMTTFTSPKTTLEYLAYLGFESSDRSNPSTTAALKVTRPRKRRKRPGRVGRNVVLGHVLGPPGSGKSALLDAFLARGFSTTYHPTIQPRTAVNTVELPGGKQCYLILDELGELEPAILENQVKLLDQCDVIVYTYDSSDPDSFAYIPELRSKYPHLEELPSVFVALKADLDRTTQRAEYQPHEYTAMLNMPSSPLHVSVTWSSMQEVFVHIAEAAMEPSTAFPRSEEDVEGKWMAWGIALGAVVCAGAAAVMIWRRVSGSGT</sequence>
<proteinExistence type="inferred from homology"/>
<organism>
    <name type="scientific">Aspergillus oryzae (strain ATCC 42149 / RIB 40)</name>
    <name type="common">Yellow koji mold</name>
    <dbReference type="NCBI Taxonomy" id="510516"/>
    <lineage>
        <taxon>Eukaryota</taxon>
        <taxon>Fungi</taxon>
        <taxon>Dikarya</taxon>
        <taxon>Ascomycota</taxon>
        <taxon>Pezizomycotina</taxon>
        <taxon>Eurotiomycetes</taxon>
        <taxon>Eurotiomycetidae</taxon>
        <taxon>Eurotiales</taxon>
        <taxon>Aspergillaceae</taxon>
        <taxon>Aspergillus</taxon>
        <taxon>Aspergillus subgen. Circumdati</taxon>
    </lineage>
</organism>
<keyword id="KW-0106">Calcium</keyword>
<keyword id="KW-0342">GTP-binding</keyword>
<keyword id="KW-0378">Hydrolase</keyword>
<keyword id="KW-0472">Membrane</keyword>
<keyword id="KW-0479">Metal-binding</keyword>
<keyword id="KW-0496">Mitochondrion</keyword>
<keyword id="KW-1000">Mitochondrion outer membrane</keyword>
<keyword id="KW-0547">Nucleotide-binding</keyword>
<keyword id="KW-1185">Reference proteome</keyword>
<keyword id="KW-0677">Repeat</keyword>
<keyword id="KW-0812">Transmembrane</keyword>
<keyword id="KW-1133">Transmembrane helix</keyword>
<protein>
    <recommendedName>
        <fullName>Mitochondrial Rho GTPase 1</fullName>
        <ecNumber>3.6.5.-</ecNumber>
    </recommendedName>
    <alternativeName>
        <fullName>GTPase EF-hand protein of mitochondria 1</fullName>
    </alternativeName>
</protein>
<dbReference type="EC" id="3.6.5.-"/>
<dbReference type="EMBL" id="BA000050">
    <property type="protein sequence ID" value="BAE57372.1"/>
    <property type="molecule type" value="Genomic_DNA"/>
</dbReference>
<dbReference type="RefSeq" id="XP_001819374.1">
    <property type="nucleotide sequence ID" value="XM_001819322.1"/>
</dbReference>
<dbReference type="SMR" id="Q2UM43"/>
<dbReference type="STRING" id="510516.Q2UM43"/>
<dbReference type="EnsemblFungi" id="BAE57372">
    <property type="protein sequence ID" value="BAE57372"/>
    <property type="gene ID" value="AO090003000148"/>
</dbReference>
<dbReference type="GeneID" id="5991357"/>
<dbReference type="KEGG" id="aor:AO090003000148"/>
<dbReference type="VEuPathDB" id="FungiDB:AO090003000148"/>
<dbReference type="HOGENOM" id="CLU_014255_3_0_1"/>
<dbReference type="OMA" id="HETTWGI"/>
<dbReference type="OrthoDB" id="85326at5052"/>
<dbReference type="Proteomes" id="UP000006564">
    <property type="component" value="Chromosome 2"/>
</dbReference>
<dbReference type="GO" id="GO:0032865">
    <property type="term" value="C:ERMES complex"/>
    <property type="evidence" value="ECO:0007669"/>
    <property type="project" value="EnsemblFungi"/>
</dbReference>
<dbReference type="GO" id="GO:0005509">
    <property type="term" value="F:calcium ion binding"/>
    <property type="evidence" value="ECO:0007669"/>
    <property type="project" value="EnsemblFungi"/>
</dbReference>
<dbReference type="GO" id="GO:0005525">
    <property type="term" value="F:GTP binding"/>
    <property type="evidence" value="ECO:0007669"/>
    <property type="project" value="UniProtKB-KW"/>
</dbReference>
<dbReference type="GO" id="GO:0003924">
    <property type="term" value="F:GTPase activity"/>
    <property type="evidence" value="ECO:0007669"/>
    <property type="project" value="EnsemblFungi"/>
</dbReference>
<dbReference type="GO" id="GO:0015886">
    <property type="term" value="P:heme transport"/>
    <property type="evidence" value="ECO:0007669"/>
    <property type="project" value="EnsemblFungi"/>
</dbReference>
<dbReference type="GO" id="GO:0000001">
    <property type="term" value="P:mitochondrion inheritance"/>
    <property type="evidence" value="ECO:0007669"/>
    <property type="project" value="EnsemblFungi"/>
</dbReference>
<dbReference type="GO" id="GO:0007005">
    <property type="term" value="P:mitochondrion organization"/>
    <property type="evidence" value="ECO:0007669"/>
    <property type="project" value="InterPro"/>
</dbReference>
<dbReference type="GO" id="GO:1990456">
    <property type="term" value="P:mitochondrion-endoplasmic reticulum membrane tethering"/>
    <property type="evidence" value="ECO:0007669"/>
    <property type="project" value="EnsemblFungi"/>
</dbReference>
<dbReference type="GO" id="GO:0055091">
    <property type="term" value="P:phospholipid homeostasis"/>
    <property type="evidence" value="ECO:0007669"/>
    <property type="project" value="EnsemblFungi"/>
</dbReference>
<dbReference type="GO" id="GO:0010821">
    <property type="term" value="P:regulation of mitochondrion organization"/>
    <property type="evidence" value="ECO:0007669"/>
    <property type="project" value="EnsemblFungi"/>
</dbReference>
<dbReference type="CDD" id="cd01892">
    <property type="entry name" value="Miro2"/>
    <property type="match status" value="1"/>
</dbReference>
<dbReference type="FunFam" id="1.10.238.10:FF:000127">
    <property type="entry name" value="Mitochondrial Rho GTPase"/>
    <property type="match status" value="1"/>
</dbReference>
<dbReference type="FunFam" id="1.10.238.10:FF:000185">
    <property type="entry name" value="Mitochondrial Rho GTPase"/>
    <property type="match status" value="1"/>
</dbReference>
<dbReference type="FunFam" id="3.40.50.300:FF:000572">
    <property type="entry name" value="Mitochondrial Rho GTPase"/>
    <property type="match status" value="1"/>
</dbReference>
<dbReference type="FunFam" id="3.40.50.300:FF:000878">
    <property type="entry name" value="Mitochondrial Rho GTPase"/>
    <property type="match status" value="1"/>
</dbReference>
<dbReference type="Gene3D" id="1.10.238.10">
    <property type="entry name" value="EF-hand"/>
    <property type="match status" value="2"/>
</dbReference>
<dbReference type="Gene3D" id="3.40.50.300">
    <property type="entry name" value="P-loop containing nucleotide triphosphate hydrolases"/>
    <property type="match status" value="2"/>
</dbReference>
<dbReference type="InterPro" id="IPR011992">
    <property type="entry name" value="EF-hand-dom_pair"/>
</dbReference>
<dbReference type="InterPro" id="IPR018247">
    <property type="entry name" value="EF_Hand_1_Ca_BS"/>
</dbReference>
<dbReference type="InterPro" id="IPR013566">
    <property type="entry name" value="EF_hand_assoc_1"/>
</dbReference>
<dbReference type="InterPro" id="IPR013567">
    <property type="entry name" value="EF_hand_assoc_2"/>
</dbReference>
<dbReference type="InterPro" id="IPR002048">
    <property type="entry name" value="EF_hand_dom"/>
</dbReference>
<dbReference type="InterPro" id="IPR021181">
    <property type="entry name" value="Miro"/>
</dbReference>
<dbReference type="InterPro" id="IPR052266">
    <property type="entry name" value="Miro-EF-hand_domain"/>
</dbReference>
<dbReference type="InterPro" id="IPR020860">
    <property type="entry name" value="MIRO_dom"/>
</dbReference>
<dbReference type="InterPro" id="IPR027417">
    <property type="entry name" value="P-loop_NTPase"/>
</dbReference>
<dbReference type="InterPro" id="IPR001806">
    <property type="entry name" value="Small_GTPase"/>
</dbReference>
<dbReference type="PANTHER" id="PTHR46819">
    <property type="entry name" value="EF-HAND CALCIUM-BINDING DOMAIN-CONTAINING PROTEIN 7"/>
    <property type="match status" value="1"/>
</dbReference>
<dbReference type="PANTHER" id="PTHR46819:SF1">
    <property type="entry name" value="EF-HAND CALCIUM-BINDING DOMAIN-CONTAINING PROTEIN 7"/>
    <property type="match status" value="1"/>
</dbReference>
<dbReference type="Pfam" id="PF08355">
    <property type="entry name" value="EF_assoc_1"/>
    <property type="match status" value="1"/>
</dbReference>
<dbReference type="Pfam" id="PF08356">
    <property type="entry name" value="EF_assoc_2"/>
    <property type="match status" value="1"/>
</dbReference>
<dbReference type="Pfam" id="PF00071">
    <property type="entry name" value="Ras"/>
    <property type="match status" value="2"/>
</dbReference>
<dbReference type="PIRSF" id="PIRSF037488">
    <property type="entry name" value="Mt_Rho_GTPase"/>
    <property type="match status" value="1"/>
</dbReference>
<dbReference type="PRINTS" id="PR00449">
    <property type="entry name" value="RASTRNSFRMNG"/>
</dbReference>
<dbReference type="SMART" id="SM00175">
    <property type="entry name" value="RAB"/>
    <property type="match status" value="1"/>
</dbReference>
<dbReference type="SMART" id="SM00173">
    <property type="entry name" value="RAS"/>
    <property type="match status" value="1"/>
</dbReference>
<dbReference type="SMART" id="SM00174">
    <property type="entry name" value="RHO"/>
    <property type="match status" value="1"/>
</dbReference>
<dbReference type="SUPFAM" id="SSF47473">
    <property type="entry name" value="EF-hand"/>
    <property type="match status" value="1"/>
</dbReference>
<dbReference type="SUPFAM" id="SSF52540">
    <property type="entry name" value="P-loop containing nucleoside triphosphate hydrolases"/>
    <property type="match status" value="2"/>
</dbReference>
<dbReference type="PROSITE" id="PS00018">
    <property type="entry name" value="EF_HAND_1"/>
    <property type="match status" value="1"/>
</dbReference>
<dbReference type="PROSITE" id="PS50222">
    <property type="entry name" value="EF_HAND_2"/>
    <property type="match status" value="2"/>
</dbReference>
<dbReference type="PROSITE" id="PS51423">
    <property type="entry name" value="MIRO"/>
    <property type="match status" value="2"/>
</dbReference>
<gene>
    <name type="primary">gem1</name>
    <name type="ORF">AO090003000148</name>
</gene>
<name>GEM1_ASPOR</name>
<evidence type="ECO:0000250" key="1">
    <source>
        <dbReference type="UniProtKB" id="P39722"/>
    </source>
</evidence>
<evidence type="ECO:0000255" key="2"/>
<evidence type="ECO:0000255" key="3">
    <source>
        <dbReference type="PROSITE-ProRule" id="PRU00448"/>
    </source>
</evidence>
<evidence type="ECO:0000255" key="4">
    <source>
        <dbReference type="PROSITE-ProRule" id="PRU00757"/>
    </source>
</evidence>
<evidence type="ECO:0000256" key="5">
    <source>
        <dbReference type="SAM" id="MobiDB-lite"/>
    </source>
</evidence>
<evidence type="ECO:0000305" key="6"/>
<reference key="1">
    <citation type="journal article" date="2005" name="Nature">
        <title>Genome sequencing and analysis of Aspergillus oryzae.</title>
        <authorList>
            <person name="Machida M."/>
            <person name="Asai K."/>
            <person name="Sano M."/>
            <person name="Tanaka T."/>
            <person name="Kumagai T."/>
            <person name="Terai G."/>
            <person name="Kusumoto K."/>
            <person name="Arima T."/>
            <person name="Akita O."/>
            <person name="Kashiwagi Y."/>
            <person name="Abe K."/>
            <person name="Gomi K."/>
            <person name="Horiuchi H."/>
            <person name="Kitamoto K."/>
            <person name="Kobayashi T."/>
            <person name="Takeuchi M."/>
            <person name="Denning D.W."/>
            <person name="Galagan J.E."/>
            <person name="Nierman W.C."/>
            <person name="Yu J."/>
            <person name="Archer D.B."/>
            <person name="Bennett J.W."/>
            <person name="Bhatnagar D."/>
            <person name="Cleveland T.E."/>
            <person name="Fedorova N.D."/>
            <person name="Gotoh O."/>
            <person name="Horikawa H."/>
            <person name="Hosoyama A."/>
            <person name="Ichinomiya M."/>
            <person name="Igarashi R."/>
            <person name="Iwashita K."/>
            <person name="Juvvadi P.R."/>
            <person name="Kato M."/>
            <person name="Kato Y."/>
            <person name="Kin T."/>
            <person name="Kokubun A."/>
            <person name="Maeda H."/>
            <person name="Maeyama N."/>
            <person name="Maruyama J."/>
            <person name="Nagasaki H."/>
            <person name="Nakajima T."/>
            <person name="Oda K."/>
            <person name="Okada K."/>
            <person name="Paulsen I."/>
            <person name="Sakamoto K."/>
            <person name="Sawano T."/>
            <person name="Takahashi M."/>
            <person name="Takase K."/>
            <person name="Terabayashi Y."/>
            <person name="Wortman J.R."/>
            <person name="Yamada O."/>
            <person name="Yamagata Y."/>
            <person name="Anazawa H."/>
            <person name="Hata Y."/>
            <person name="Koide Y."/>
            <person name="Komori T."/>
            <person name="Koyama Y."/>
            <person name="Minetoki T."/>
            <person name="Suharnan S."/>
            <person name="Tanaka A."/>
            <person name="Isono K."/>
            <person name="Kuhara S."/>
            <person name="Ogasawara N."/>
            <person name="Kikuchi H."/>
        </authorList>
    </citation>
    <scope>NUCLEOTIDE SEQUENCE [LARGE SCALE GENOMIC DNA]</scope>
    <source>
        <strain>ATCC 42149 / RIB 40</strain>
    </source>
</reference>